<organism>
    <name type="scientific">Arabidopsis thaliana</name>
    <name type="common">Mouse-ear cress</name>
    <dbReference type="NCBI Taxonomy" id="3702"/>
    <lineage>
        <taxon>Eukaryota</taxon>
        <taxon>Viridiplantae</taxon>
        <taxon>Streptophyta</taxon>
        <taxon>Embryophyta</taxon>
        <taxon>Tracheophyta</taxon>
        <taxon>Spermatophyta</taxon>
        <taxon>Magnoliopsida</taxon>
        <taxon>eudicotyledons</taxon>
        <taxon>Gunneridae</taxon>
        <taxon>Pentapetalae</taxon>
        <taxon>rosids</taxon>
        <taxon>malvids</taxon>
        <taxon>Brassicales</taxon>
        <taxon>Brassicaceae</taxon>
        <taxon>Camelineae</taxon>
        <taxon>Arabidopsis</taxon>
    </lineage>
</organism>
<proteinExistence type="evidence at transcript level"/>
<name>VSR7_ARATH</name>
<feature type="signal peptide" evidence="2">
    <location>
        <begin position="1"/>
        <end position="26"/>
    </location>
</feature>
<feature type="chain" id="PRO_0000036469" description="Vacuolar-sorting receptor 7">
    <location>
        <begin position="27"/>
        <end position="625"/>
    </location>
</feature>
<feature type="topological domain" description="Lumenal" evidence="2">
    <location>
        <begin position="27"/>
        <end position="564"/>
    </location>
</feature>
<feature type="transmembrane region" description="Helical" evidence="2">
    <location>
        <begin position="565"/>
        <end position="585"/>
    </location>
</feature>
<feature type="topological domain" description="Cytoplasmic" evidence="2">
    <location>
        <begin position="586"/>
        <end position="625"/>
    </location>
</feature>
<feature type="domain" description="PA">
    <location>
        <begin position="58"/>
        <end position="166"/>
    </location>
</feature>
<feature type="domain" description="EGF-like 1">
    <location>
        <begin position="414"/>
        <end position="464"/>
    </location>
</feature>
<feature type="domain" description="EGF-like 2">
    <location>
        <begin position="467"/>
        <end position="513"/>
    </location>
</feature>
<feature type="domain" description="EGF-like 3; calcium-binding" evidence="2">
    <location>
        <begin position="514"/>
        <end position="556"/>
    </location>
</feature>
<feature type="short sequence motif" description="Tyrosine-based internalization motif" evidence="1">
    <location>
        <begin position="605"/>
        <end position="608"/>
    </location>
</feature>
<feature type="glycosylation site" description="N-linked (GlcNAc...) asparagine" evidence="2">
    <location>
        <position position="292"/>
    </location>
</feature>
<feature type="glycosylation site" description="N-linked (GlcNAc...) asparagine" evidence="2">
    <location>
        <position position="400"/>
    </location>
</feature>
<feature type="glycosylation site" description="N-linked (GlcNAc...) asparagine" evidence="2">
    <location>
        <position position="432"/>
    </location>
</feature>
<feature type="disulfide bond" evidence="1">
    <location>
        <begin position="418"/>
        <end position="436"/>
    </location>
</feature>
<feature type="disulfide bond" evidence="1">
    <location>
        <begin position="425"/>
        <end position="445"/>
    </location>
</feature>
<feature type="disulfide bond" evidence="1">
    <location>
        <begin position="447"/>
        <end position="463"/>
    </location>
</feature>
<feature type="disulfide bond" evidence="1">
    <location>
        <begin position="471"/>
        <end position="491"/>
    </location>
</feature>
<feature type="disulfide bond" evidence="1">
    <location>
        <begin position="478"/>
        <end position="499"/>
    </location>
</feature>
<feature type="disulfide bond" evidence="1">
    <location>
        <begin position="501"/>
        <end position="512"/>
    </location>
</feature>
<feature type="disulfide bond" evidence="1">
    <location>
        <begin position="542"/>
        <end position="555"/>
    </location>
</feature>
<feature type="sequence conflict" description="In Ref. 3; AAM96969/AAN15714." evidence="5" ref="3">
    <original>P</original>
    <variation>T</variation>
    <location>
        <position position="134"/>
    </location>
</feature>
<feature type="sequence conflict" description="In Ref. 3; AAM96969/AAN15714." evidence="5" ref="3">
    <original>Y</original>
    <variation>D</variation>
    <location>
        <position position="559"/>
    </location>
</feature>
<accession>Q8L7E3</accession>
<accession>O49438</accession>
<protein>
    <recommendedName>
        <fullName>Vacuolar-sorting receptor 7</fullName>
        <shortName>AtVSR7</shortName>
    </recommendedName>
    <alternativeName>
        <fullName>BP80-like protein f</fullName>
        <shortName>AtBP80f</shortName>
    </alternativeName>
    <alternativeName>
        <fullName>Epidermal growth factor receptor-like protein 3</fullName>
        <shortName>AtELP3</shortName>
    </alternativeName>
</protein>
<gene>
    <name type="primary">VSR7</name>
    <name type="synonym">BP80F</name>
    <name type="synonym">ELP3</name>
    <name type="ordered locus">At4g20110</name>
    <name type="ORF">F18F4.210</name>
</gene>
<sequence length="625" mass="69800">MGLVNGRASLTFLLAALTIIAMVVEARFVVEKESISVLNPEEMRSKHDGSIANFGLPDYGGFLIGSVVYPDSKTDGCSAFGKTFKPKFPRPTILLLDRGGCYFALKAWHAQQAGAAAVLVADNVDEPLLTMDSPEESKDADGFIEKLTIPSVLIDKSFGDDLRQGFQKGKNIVIKLDWRESVPHPDKRVEYELWTNSNDECGARCDEQMDFVKNFKGHAQILEKGGYTAFTPHYITWFCPFQFINSPHCKSQCINHGRYCAPDPEDNFREGYEGKDVVLENLRQLCVHRVANESSRPWVWWDYVTDFHSRCSMKEKKYSIDCAESVIKSLNLPIEKIKKCIGDPEADTENQVLRTEQVSQIGRGNRGDVTILPTLVINNAQYRGRLERTAVLKAICAGFNETSEPAICLNTGLETNECLENNGGCWQDTKANITACQDTFRGRLCECPVVKGVQYKGDGYTSCTPYGPARCTMNNGGCWSDTRNGLTFSACSDSVSTGCKCPEGFQGDGLTCEDINECKERSVCQCSGCRCKNSWGGYKCSCSGDRLYINDQDTCIERYGSKTAWWLTFLILAIVAVAGLAGYIFYKYRFRSYMDSEIMTIMSQYMPLESQRAREVPSEAEPFTL</sequence>
<keyword id="KW-0025">Alternative splicing</keyword>
<keyword id="KW-0106">Calcium</keyword>
<keyword id="KW-1015">Disulfide bond</keyword>
<keyword id="KW-0245">EGF-like domain</keyword>
<keyword id="KW-0325">Glycoprotein</keyword>
<keyword id="KW-0333">Golgi apparatus</keyword>
<keyword id="KW-0472">Membrane</keyword>
<keyword id="KW-0653">Protein transport</keyword>
<keyword id="KW-1185">Reference proteome</keyword>
<keyword id="KW-0677">Repeat</keyword>
<keyword id="KW-0732">Signal</keyword>
<keyword id="KW-0812">Transmembrane</keyword>
<keyword id="KW-1133">Transmembrane helix</keyword>
<keyword id="KW-0813">Transport</keyword>
<reference key="1">
    <citation type="journal article" date="1999" name="Nature">
        <title>Sequence and analysis of chromosome 4 of the plant Arabidopsis thaliana.</title>
        <authorList>
            <person name="Mayer K.F.X."/>
            <person name="Schueller C."/>
            <person name="Wambutt R."/>
            <person name="Murphy G."/>
            <person name="Volckaert G."/>
            <person name="Pohl T."/>
            <person name="Duesterhoeft A."/>
            <person name="Stiekema W."/>
            <person name="Entian K.-D."/>
            <person name="Terryn N."/>
            <person name="Harris B."/>
            <person name="Ansorge W."/>
            <person name="Brandt P."/>
            <person name="Grivell L.A."/>
            <person name="Rieger M."/>
            <person name="Weichselgartner M."/>
            <person name="de Simone V."/>
            <person name="Obermaier B."/>
            <person name="Mache R."/>
            <person name="Mueller M."/>
            <person name="Kreis M."/>
            <person name="Delseny M."/>
            <person name="Puigdomenech P."/>
            <person name="Watson M."/>
            <person name="Schmidtheini T."/>
            <person name="Reichert B."/>
            <person name="Portetelle D."/>
            <person name="Perez-Alonso M."/>
            <person name="Boutry M."/>
            <person name="Bancroft I."/>
            <person name="Vos P."/>
            <person name="Hoheisel J."/>
            <person name="Zimmermann W."/>
            <person name="Wedler H."/>
            <person name="Ridley P."/>
            <person name="Langham S.-A."/>
            <person name="McCullagh B."/>
            <person name="Bilham L."/>
            <person name="Robben J."/>
            <person name="van der Schueren J."/>
            <person name="Grymonprez B."/>
            <person name="Chuang Y.-J."/>
            <person name="Vandenbussche F."/>
            <person name="Braeken M."/>
            <person name="Weltjens I."/>
            <person name="Voet M."/>
            <person name="Bastiaens I."/>
            <person name="Aert R."/>
            <person name="Defoor E."/>
            <person name="Weitzenegger T."/>
            <person name="Bothe G."/>
            <person name="Ramsperger U."/>
            <person name="Hilbert H."/>
            <person name="Braun M."/>
            <person name="Holzer E."/>
            <person name="Brandt A."/>
            <person name="Peters S."/>
            <person name="van Staveren M."/>
            <person name="Dirkse W."/>
            <person name="Mooijman P."/>
            <person name="Klein Lankhorst R."/>
            <person name="Rose M."/>
            <person name="Hauf J."/>
            <person name="Koetter P."/>
            <person name="Berneiser S."/>
            <person name="Hempel S."/>
            <person name="Feldpausch M."/>
            <person name="Lamberth S."/>
            <person name="Van den Daele H."/>
            <person name="De Keyser A."/>
            <person name="Buysshaert C."/>
            <person name="Gielen J."/>
            <person name="Villarroel R."/>
            <person name="De Clercq R."/>
            <person name="van Montagu M."/>
            <person name="Rogers J."/>
            <person name="Cronin A."/>
            <person name="Quail M.A."/>
            <person name="Bray-Allen S."/>
            <person name="Clark L."/>
            <person name="Doggett J."/>
            <person name="Hall S."/>
            <person name="Kay M."/>
            <person name="Lennard N."/>
            <person name="McLay K."/>
            <person name="Mayes R."/>
            <person name="Pettett A."/>
            <person name="Rajandream M.A."/>
            <person name="Lyne M."/>
            <person name="Benes V."/>
            <person name="Rechmann S."/>
            <person name="Borkova D."/>
            <person name="Bloecker H."/>
            <person name="Scharfe M."/>
            <person name="Grimm M."/>
            <person name="Loehnert T.-H."/>
            <person name="Dose S."/>
            <person name="de Haan M."/>
            <person name="Maarse A.C."/>
            <person name="Schaefer M."/>
            <person name="Mueller-Auer S."/>
            <person name="Gabel C."/>
            <person name="Fuchs M."/>
            <person name="Fartmann B."/>
            <person name="Granderath K."/>
            <person name="Dauner D."/>
            <person name="Herzl A."/>
            <person name="Neumann S."/>
            <person name="Argiriou A."/>
            <person name="Vitale D."/>
            <person name="Liguori R."/>
            <person name="Piravandi E."/>
            <person name="Massenet O."/>
            <person name="Quigley F."/>
            <person name="Clabauld G."/>
            <person name="Muendlein A."/>
            <person name="Felber R."/>
            <person name="Schnabl S."/>
            <person name="Hiller R."/>
            <person name="Schmidt W."/>
            <person name="Lecharny A."/>
            <person name="Aubourg S."/>
            <person name="Chefdor F."/>
            <person name="Cooke R."/>
            <person name="Berger C."/>
            <person name="Monfort A."/>
            <person name="Casacuberta E."/>
            <person name="Gibbons T."/>
            <person name="Weber N."/>
            <person name="Vandenbol M."/>
            <person name="Bargues M."/>
            <person name="Terol J."/>
            <person name="Torres A."/>
            <person name="Perez-Perez A."/>
            <person name="Purnelle B."/>
            <person name="Bent E."/>
            <person name="Johnson S."/>
            <person name="Tacon D."/>
            <person name="Jesse T."/>
            <person name="Heijnen L."/>
            <person name="Schwarz S."/>
            <person name="Scholler P."/>
            <person name="Heber S."/>
            <person name="Francs P."/>
            <person name="Bielke C."/>
            <person name="Frishman D."/>
            <person name="Haase D."/>
            <person name="Lemcke K."/>
            <person name="Mewes H.-W."/>
            <person name="Stocker S."/>
            <person name="Zaccaria P."/>
            <person name="Bevan M."/>
            <person name="Wilson R.K."/>
            <person name="de la Bastide M."/>
            <person name="Habermann K."/>
            <person name="Parnell L."/>
            <person name="Dedhia N."/>
            <person name="Gnoj L."/>
            <person name="Schutz K."/>
            <person name="Huang E."/>
            <person name="Spiegel L."/>
            <person name="Sekhon M."/>
            <person name="Murray J."/>
            <person name="Sheet P."/>
            <person name="Cordes M."/>
            <person name="Abu-Threideh J."/>
            <person name="Stoneking T."/>
            <person name="Kalicki J."/>
            <person name="Graves T."/>
            <person name="Harmon G."/>
            <person name="Edwards J."/>
            <person name="Latreille P."/>
            <person name="Courtney L."/>
            <person name="Cloud J."/>
            <person name="Abbott A."/>
            <person name="Scott K."/>
            <person name="Johnson D."/>
            <person name="Minx P."/>
            <person name="Bentley D."/>
            <person name="Fulton B."/>
            <person name="Miller N."/>
            <person name="Greco T."/>
            <person name="Kemp K."/>
            <person name="Kramer J."/>
            <person name="Fulton L."/>
            <person name="Mardis E."/>
            <person name="Dante M."/>
            <person name="Pepin K."/>
            <person name="Hillier L.W."/>
            <person name="Nelson J."/>
            <person name="Spieth J."/>
            <person name="Ryan E."/>
            <person name="Andrews S."/>
            <person name="Geisel C."/>
            <person name="Layman D."/>
            <person name="Du H."/>
            <person name="Ali J."/>
            <person name="Berghoff A."/>
            <person name="Jones K."/>
            <person name="Drone K."/>
            <person name="Cotton M."/>
            <person name="Joshu C."/>
            <person name="Antonoiu B."/>
            <person name="Zidanic M."/>
            <person name="Strong C."/>
            <person name="Sun H."/>
            <person name="Lamar B."/>
            <person name="Yordan C."/>
            <person name="Ma P."/>
            <person name="Zhong J."/>
            <person name="Preston R."/>
            <person name="Vil D."/>
            <person name="Shekher M."/>
            <person name="Matero A."/>
            <person name="Shah R."/>
            <person name="Swaby I.K."/>
            <person name="O'Shaughnessy A."/>
            <person name="Rodriguez M."/>
            <person name="Hoffman J."/>
            <person name="Till S."/>
            <person name="Granat S."/>
            <person name="Shohdy N."/>
            <person name="Hasegawa A."/>
            <person name="Hameed A."/>
            <person name="Lodhi M."/>
            <person name="Johnson A."/>
            <person name="Chen E."/>
            <person name="Marra M.A."/>
            <person name="Martienssen R."/>
            <person name="McCombie W.R."/>
        </authorList>
    </citation>
    <scope>NUCLEOTIDE SEQUENCE [LARGE SCALE GENOMIC DNA]</scope>
    <source>
        <strain>cv. Columbia</strain>
    </source>
</reference>
<reference key="2">
    <citation type="journal article" date="2017" name="Plant J.">
        <title>Araport11: a complete reannotation of the Arabidopsis thaliana reference genome.</title>
        <authorList>
            <person name="Cheng C.Y."/>
            <person name="Krishnakumar V."/>
            <person name="Chan A.P."/>
            <person name="Thibaud-Nissen F."/>
            <person name="Schobel S."/>
            <person name="Town C.D."/>
        </authorList>
    </citation>
    <scope>GENOME REANNOTATION</scope>
    <source>
        <strain>cv. Columbia</strain>
    </source>
</reference>
<reference key="3">
    <citation type="journal article" date="2003" name="Science">
        <title>Empirical analysis of transcriptional activity in the Arabidopsis genome.</title>
        <authorList>
            <person name="Yamada K."/>
            <person name="Lim J."/>
            <person name="Dale J.M."/>
            <person name="Chen H."/>
            <person name="Shinn P."/>
            <person name="Palm C.J."/>
            <person name="Southwick A.M."/>
            <person name="Wu H.C."/>
            <person name="Kim C.J."/>
            <person name="Nguyen M."/>
            <person name="Pham P.K."/>
            <person name="Cheuk R.F."/>
            <person name="Karlin-Newmann G."/>
            <person name="Liu S.X."/>
            <person name="Lam B."/>
            <person name="Sakano H."/>
            <person name="Wu T."/>
            <person name="Yu G."/>
            <person name="Miranda M."/>
            <person name="Quach H.L."/>
            <person name="Tripp M."/>
            <person name="Chang C.H."/>
            <person name="Lee J.M."/>
            <person name="Toriumi M.J."/>
            <person name="Chan M.M."/>
            <person name="Tang C.C."/>
            <person name="Onodera C.S."/>
            <person name="Deng J.M."/>
            <person name="Akiyama K."/>
            <person name="Ansari Y."/>
            <person name="Arakawa T."/>
            <person name="Banh J."/>
            <person name="Banno F."/>
            <person name="Bowser L."/>
            <person name="Brooks S.Y."/>
            <person name="Carninci P."/>
            <person name="Chao Q."/>
            <person name="Choy N."/>
            <person name="Enju A."/>
            <person name="Goldsmith A.D."/>
            <person name="Gurjal M."/>
            <person name="Hansen N.F."/>
            <person name="Hayashizaki Y."/>
            <person name="Johnson-Hopson C."/>
            <person name="Hsuan V.W."/>
            <person name="Iida K."/>
            <person name="Karnes M."/>
            <person name="Khan S."/>
            <person name="Koesema E."/>
            <person name="Ishida J."/>
            <person name="Jiang P.X."/>
            <person name="Jones T."/>
            <person name="Kawai J."/>
            <person name="Kamiya A."/>
            <person name="Meyers C."/>
            <person name="Nakajima M."/>
            <person name="Narusaka M."/>
            <person name="Seki M."/>
            <person name="Sakurai T."/>
            <person name="Satou M."/>
            <person name="Tamse R."/>
            <person name="Vaysberg M."/>
            <person name="Wallender E.K."/>
            <person name="Wong C."/>
            <person name="Yamamura Y."/>
            <person name="Yuan S."/>
            <person name="Shinozaki K."/>
            <person name="Davis R.W."/>
            <person name="Theologis A."/>
            <person name="Ecker J.R."/>
        </authorList>
    </citation>
    <scope>NUCLEOTIDE SEQUENCE [LARGE SCALE MRNA]</scope>
    <source>
        <strain>cv. Columbia</strain>
    </source>
</reference>
<reference key="4">
    <citation type="journal article" date="1999" name="Biochim. Biophys. Acta">
        <title>A family of Arabidopsis plasma membrane receptors presenting animal beta-integrin domains.</title>
        <authorList>
            <person name="Laval V."/>
            <person name="Chabannes M."/>
            <person name="Carriere M."/>
            <person name="Canut H."/>
            <person name="Barre A."/>
            <person name="Rouge P."/>
            <person name="Pont-Lezica R."/>
            <person name="Galaud J.-P."/>
        </authorList>
    </citation>
    <scope>TISSUE SPECIFICITY</scope>
</reference>
<reference key="5">
    <citation type="journal article" date="2003" name="J. Exp. Bot.">
        <title>Seed germination is blocked in Arabidopsis putative vacuolar sorting receptor (atbp80) antisense transformants.</title>
        <authorList>
            <person name="Laval V."/>
            <person name="Masclaux F."/>
            <person name="Serin A."/>
            <person name="Carriere M."/>
            <person name="Roldan C."/>
            <person name="Devic M."/>
            <person name="Pont-Lezica R.F."/>
            <person name="Galaud J.-P."/>
        </authorList>
    </citation>
    <scope>TISSUE SPECIFICITY</scope>
</reference>
<reference key="6">
    <citation type="journal article" date="2003" name="Proc. Natl. Acad. Sci. U.S.A.">
        <title>Vacuolar sorting receptor for seed storage proteins in Arabidopsis thaliana.</title>
        <authorList>
            <person name="Shimada T."/>
            <person name="Fuji K."/>
            <person name="Tamura K."/>
            <person name="Kondo M."/>
            <person name="Nishimura M."/>
            <person name="Hara-Nishimura I."/>
        </authorList>
    </citation>
    <scope>GENE FAMILY</scope>
    <scope>NOMENCLATURE</scope>
</reference>
<dbReference type="EMBL" id="AL021637">
    <property type="protein sequence ID" value="CAA16619.1"/>
    <property type="status" value="ALT_SEQ"/>
    <property type="molecule type" value="Genomic_DNA"/>
</dbReference>
<dbReference type="EMBL" id="AL161552">
    <property type="protein sequence ID" value="CAB79011.1"/>
    <property type="status" value="ALT_SEQ"/>
    <property type="molecule type" value="Genomic_DNA"/>
</dbReference>
<dbReference type="EMBL" id="CP002687">
    <property type="protein sequence ID" value="AEE84276.1"/>
    <property type="molecule type" value="Genomic_DNA"/>
</dbReference>
<dbReference type="EMBL" id="AY136303">
    <property type="protein sequence ID" value="AAM96969.1"/>
    <property type="molecule type" value="mRNA"/>
</dbReference>
<dbReference type="EMBL" id="BT000395">
    <property type="protein sequence ID" value="AAN15714.1"/>
    <property type="molecule type" value="mRNA"/>
</dbReference>
<dbReference type="PIR" id="T04895">
    <property type="entry name" value="T04895"/>
</dbReference>
<dbReference type="RefSeq" id="NP_193744.1">
    <molecule id="Q8L7E3-1"/>
    <property type="nucleotide sequence ID" value="NM_118130.4"/>
</dbReference>
<dbReference type="SMR" id="Q8L7E3"/>
<dbReference type="FunCoup" id="Q8L7E3">
    <property type="interactions" value="80"/>
</dbReference>
<dbReference type="STRING" id="3702.Q8L7E3"/>
<dbReference type="GlyCosmos" id="Q8L7E3">
    <property type="glycosylation" value="3 sites, No reported glycans"/>
</dbReference>
<dbReference type="GlyGen" id="Q8L7E3">
    <property type="glycosylation" value="3 sites"/>
</dbReference>
<dbReference type="PaxDb" id="3702-AT4G20110.2"/>
<dbReference type="ProteomicsDB" id="242324">
    <molecule id="Q8L7E3-1"/>
</dbReference>
<dbReference type="EnsemblPlants" id="AT4G20110.1">
    <molecule id="Q8L7E3-1"/>
    <property type="protein sequence ID" value="AT4G20110.1"/>
    <property type="gene ID" value="AT4G20110"/>
</dbReference>
<dbReference type="GeneID" id="827757"/>
<dbReference type="Gramene" id="AT4G20110.1">
    <molecule id="Q8L7E3-1"/>
    <property type="protein sequence ID" value="AT4G20110.1"/>
    <property type="gene ID" value="AT4G20110"/>
</dbReference>
<dbReference type="KEGG" id="ath:AT4G20110"/>
<dbReference type="Araport" id="AT4G20110"/>
<dbReference type="TAIR" id="AT4G20110">
    <property type="gene designation" value="VSR7"/>
</dbReference>
<dbReference type="eggNOG" id="ENOG502QQUF">
    <property type="taxonomic scope" value="Eukaryota"/>
</dbReference>
<dbReference type="HOGENOM" id="CLU_031082_1_0_1"/>
<dbReference type="InParanoid" id="Q8L7E3"/>
<dbReference type="PhylomeDB" id="Q8L7E3"/>
<dbReference type="PRO" id="PR:Q8L7E3"/>
<dbReference type="Proteomes" id="UP000006548">
    <property type="component" value="Chromosome 4"/>
</dbReference>
<dbReference type="ExpressionAtlas" id="Q8L7E3">
    <property type="expression patterns" value="baseline and differential"/>
</dbReference>
<dbReference type="GO" id="GO:0000139">
    <property type="term" value="C:Golgi membrane"/>
    <property type="evidence" value="ECO:0007669"/>
    <property type="project" value="UniProtKB-SubCell"/>
</dbReference>
<dbReference type="GO" id="GO:0005509">
    <property type="term" value="F:calcium ion binding"/>
    <property type="evidence" value="ECO:0007669"/>
    <property type="project" value="InterPro"/>
</dbReference>
<dbReference type="GO" id="GO:0015031">
    <property type="term" value="P:protein transport"/>
    <property type="evidence" value="ECO:0007669"/>
    <property type="project" value="UniProtKB-KW"/>
</dbReference>
<dbReference type="CDD" id="cd00054">
    <property type="entry name" value="EGF_CA"/>
    <property type="match status" value="1"/>
</dbReference>
<dbReference type="CDD" id="cd02125">
    <property type="entry name" value="PA_VSR"/>
    <property type="match status" value="1"/>
</dbReference>
<dbReference type="FunFam" id="3.50.30.30:FF:000001">
    <property type="entry name" value="Vacuolar-sorting receptor 1"/>
    <property type="match status" value="1"/>
</dbReference>
<dbReference type="FunFam" id="2.10.25.10:FF:000178">
    <property type="entry name" value="vacuolar-sorting receptor 1"/>
    <property type="match status" value="1"/>
</dbReference>
<dbReference type="Gene3D" id="3.50.30.30">
    <property type="match status" value="1"/>
</dbReference>
<dbReference type="Gene3D" id="2.10.25.10">
    <property type="entry name" value="Laminin"/>
    <property type="match status" value="2"/>
</dbReference>
<dbReference type="InterPro" id="IPR026823">
    <property type="entry name" value="cEGF"/>
</dbReference>
<dbReference type="InterPro" id="IPR001881">
    <property type="entry name" value="EGF-like_Ca-bd_dom"/>
</dbReference>
<dbReference type="InterPro" id="IPR018097">
    <property type="entry name" value="EGF_Ca-bd_CS"/>
</dbReference>
<dbReference type="InterPro" id="IPR046450">
    <property type="entry name" value="PA_dom_sf"/>
</dbReference>
<dbReference type="InterPro" id="IPR003137">
    <property type="entry name" value="PA_domain"/>
</dbReference>
<dbReference type="InterPro" id="IPR056858">
    <property type="entry name" value="VSR_TRX"/>
</dbReference>
<dbReference type="PANTHER" id="PTHR22702">
    <property type="entry name" value="PROTEASE-ASSOCIATED DOMAIN-CONTAINING PROTEIN"/>
    <property type="match status" value="1"/>
</dbReference>
<dbReference type="PANTHER" id="PTHR22702:SF4">
    <property type="entry name" value="VACUOLAR-SORTING RECEPTOR 6-LIKE"/>
    <property type="match status" value="1"/>
</dbReference>
<dbReference type="Pfam" id="PF12662">
    <property type="entry name" value="cEGF"/>
    <property type="match status" value="1"/>
</dbReference>
<dbReference type="Pfam" id="PF02225">
    <property type="entry name" value="PA"/>
    <property type="match status" value="1"/>
</dbReference>
<dbReference type="Pfam" id="PF25011">
    <property type="entry name" value="VSR_TRX"/>
    <property type="match status" value="1"/>
</dbReference>
<dbReference type="SMART" id="SM00179">
    <property type="entry name" value="EGF_CA"/>
    <property type="match status" value="1"/>
</dbReference>
<dbReference type="SUPFAM" id="SSF52025">
    <property type="entry name" value="PA domain"/>
    <property type="match status" value="1"/>
</dbReference>
<dbReference type="PROSITE" id="PS00010">
    <property type="entry name" value="ASX_HYDROXYL"/>
    <property type="match status" value="1"/>
</dbReference>
<dbReference type="PROSITE" id="PS00022">
    <property type="entry name" value="EGF_1"/>
    <property type="match status" value="1"/>
</dbReference>
<dbReference type="PROSITE" id="PS01186">
    <property type="entry name" value="EGF_2"/>
    <property type="match status" value="1"/>
</dbReference>
<dbReference type="PROSITE" id="PS01187">
    <property type="entry name" value="EGF_CA"/>
    <property type="match status" value="1"/>
</dbReference>
<comment type="function">
    <text evidence="1">Vacuolar-sorting receptor (VSR) involved in clathrin-coated vesicles sorting from Golgi apparatus to vacuoles.</text>
</comment>
<comment type="subcellular location">
    <subcellularLocation>
        <location evidence="5">Golgi apparatus membrane</location>
    </subcellularLocation>
</comment>
<comment type="alternative products">
    <event type="alternative splicing"/>
    <isoform>
        <id>Q8L7E3-1</id>
        <name>1</name>
        <sequence type="displayed"/>
    </isoform>
    <text>A number of isoforms are produced. According to EST sequences.</text>
</comment>
<comment type="tissue specificity">
    <text evidence="3 4">Expressed at low levels in seedlings, roots, young leaves, flowers and siliques.</text>
</comment>
<comment type="domain">
    <text evidence="1">The tyrosine-based internalization signal may be involved in trafficking at the TGN.</text>
</comment>
<comment type="similarity">
    <text evidence="5">Belongs to the VSR (BP-80) family.</text>
</comment>
<comment type="sequence caution" evidence="5">
    <conflict type="erroneous gene model prediction">
        <sequence resource="EMBL-CDS" id="CAA16619"/>
    </conflict>
</comment>
<comment type="sequence caution" evidence="5">
    <conflict type="erroneous gene model prediction">
        <sequence resource="EMBL-CDS" id="CAB79011"/>
    </conflict>
</comment>
<evidence type="ECO:0000250" key="1"/>
<evidence type="ECO:0000255" key="2"/>
<evidence type="ECO:0000269" key="3">
    <source>
    </source>
</evidence>
<evidence type="ECO:0000269" key="4">
    <source>
    </source>
</evidence>
<evidence type="ECO:0000305" key="5"/>